<feature type="chain" id="PRO_0000384568" description="Uncharacterized protein ORF224">
    <location>
        <begin position="1"/>
        <end position="224"/>
    </location>
</feature>
<dbReference type="EMBL" id="AJ567472">
    <property type="protein sequence ID" value="CAD98965.1"/>
    <property type="molecule type" value="Genomic_DNA"/>
</dbReference>
<dbReference type="RefSeq" id="YP_003761.1">
    <property type="nucleotide sequence ID" value="NC_005830.1"/>
</dbReference>
<dbReference type="KEGG" id="vg:2769167"/>
<dbReference type="Proteomes" id="UP000000514">
    <property type="component" value="Genome"/>
</dbReference>
<proteinExistence type="predicted"/>
<protein>
    <recommendedName>
        <fullName>Uncharacterized protein ORF224</fullName>
    </recommendedName>
</protein>
<organismHost>
    <name type="scientific">Acidianus hospitalis</name>
    <dbReference type="NCBI Taxonomy" id="563177"/>
</organismHost>
<organismHost>
    <name type="scientific">Acidianus infernus</name>
    <dbReference type="NCBI Taxonomy" id="12915"/>
</organismHost>
<sequence length="224" mass="25652">MRAIRPFKYFPYSRREDEITVEQTNESKLYVTGTYVGGQYGKMIWNLVNGTDDIRYVGLIRGAELNINGQIVKVPDYLFGRAFGDVYYLLGMSTYMTNPADVPLYTLSVYNNETIGFVFALPPKTTVHVPEYGFIGLINYNAKLIEVKPKELGTYVIIYSPEEYMIYYEEIGQNLGILPTVYMVNSYNVEAGYTGYGFHERVILKIPKSWLNFAVDLTRLLGKI</sequence>
<gene>
    <name type="ORF">ORF224</name>
</gene>
<organism>
    <name type="scientific">Acidianus filamentous virus 1 (isolate United States/Yellowstone)</name>
    <name type="common">AFV-1</name>
    <dbReference type="NCBI Taxonomy" id="654909"/>
    <lineage>
        <taxon>Viruses</taxon>
        <taxon>Adnaviria</taxon>
        <taxon>Zilligvirae</taxon>
        <taxon>Taleaviricota</taxon>
        <taxon>Tokiviricetes</taxon>
        <taxon>Ligamenvirales</taxon>
        <taxon>Ungulaviridae</taxon>
        <taxon>Captovirus</taxon>
        <taxon>Acidianus filamentous virus 1</taxon>
    </lineage>
</organism>
<accession>Q70LB5</accession>
<name>Y224_AFV1Y</name>
<keyword id="KW-1185">Reference proteome</keyword>
<reference key="1">
    <citation type="journal article" date="2003" name="Virology">
        <title>AFV1, a novel virus infecting hyperthermophilic archaea of the genus acidianus.</title>
        <authorList>
            <person name="Bettstetter M."/>
            <person name="Peng X."/>
            <person name="Garrett R.A."/>
            <person name="Prangishvili D."/>
        </authorList>
    </citation>
    <scope>NUCLEOTIDE SEQUENCE [GENOMIC DNA]</scope>
</reference>